<dbReference type="EC" id="2.3.2.27"/>
<dbReference type="EMBL" id="AF302502">
    <property type="protein sequence ID" value="AAG15390.1"/>
    <property type="molecule type" value="mRNA"/>
</dbReference>
<dbReference type="EMBL" id="AK315727">
    <property type="protein sequence ID" value="BAG38082.1"/>
    <property type="molecule type" value="mRNA"/>
</dbReference>
<dbReference type="EMBL" id="CH471061">
    <property type="protein sequence ID" value="EAW80689.1"/>
    <property type="molecule type" value="Genomic_DNA"/>
</dbReference>
<dbReference type="EMBL" id="BC009476">
    <property type="protein sequence ID" value="AAH09476.1"/>
    <property type="molecule type" value="mRNA"/>
</dbReference>
<dbReference type="CCDS" id="CCDS9726.1"/>
<dbReference type="RefSeq" id="NP_067078.1">
    <property type="nucleotide sequence ID" value="NM_021255.3"/>
</dbReference>
<dbReference type="PDB" id="3EGA">
    <property type="method" value="X-ray"/>
    <property type="resolution" value="1.80 A"/>
    <property type="chains" value="A=15-275"/>
</dbReference>
<dbReference type="PDB" id="3EGB">
    <property type="method" value="X-ray"/>
    <property type="resolution" value="3.25 A"/>
    <property type="chains" value="A/B=7-289"/>
</dbReference>
<dbReference type="PDBsum" id="3EGA"/>
<dbReference type="PDBsum" id="3EGB"/>
<dbReference type="SMR" id="Q9HAT8"/>
<dbReference type="BioGRID" id="121417">
    <property type="interactions" value="51"/>
</dbReference>
<dbReference type="DIP" id="DIP-31350N"/>
<dbReference type="FunCoup" id="Q9HAT8">
    <property type="interactions" value="1064"/>
</dbReference>
<dbReference type="IntAct" id="Q9HAT8">
    <property type="interactions" value="33"/>
</dbReference>
<dbReference type="MINT" id="Q9HAT8"/>
<dbReference type="STRING" id="9606.ENSP00000267460"/>
<dbReference type="iPTMnet" id="Q9HAT8"/>
<dbReference type="PhosphoSitePlus" id="Q9HAT8"/>
<dbReference type="BioMuta" id="PELI2"/>
<dbReference type="DMDM" id="37999785"/>
<dbReference type="jPOST" id="Q9HAT8"/>
<dbReference type="MassIVE" id="Q9HAT8"/>
<dbReference type="PaxDb" id="9606-ENSP00000267460"/>
<dbReference type="PeptideAtlas" id="Q9HAT8"/>
<dbReference type="ProteomicsDB" id="81433"/>
<dbReference type="Pumba" id="Q9HAT8"/>
<dbReference type="Antibodypedia" id="11214">
    <property type="antibodies" value="88 antibodies from 20 providers"/>
</dbReference>
<dbReference type="DNASU" id="57161"/>
<dbReference type="Ensembl" id="ENST00000267460.9">
    <property type="protein sequence ID" value="ENSP00000267460.4"/>
    <property type="gene ID" value="ENSG00000139946.11"/>
</dbReference>
<dbReference type="GeneID" id="57161"/>
<dbReference type="KEGG" id="hsa:57161"/>
<dbReference type="MANE-Select" id="ENST00000267460.9">
    <property type="protein sequence ID" value="ENSP00000267460.4"/>
    <property type="RefSeq nucleotide sequence ID" value="NM_021255.3"/>
    <property type="RefSeq protein sequence ID" value="NP_067078.1"/>
</dbReference>
<dbReference type="UCSC" id="uc001xch.4">
    <property type="organism name" value="human"/>
</dbReference>
<dbReference type="AGR" id="HGNC:8828"/>
<dbReference type="CTD" id="57161"/>
<dbReference type="DisGeNET" id="57161"/>
<dbReference type="GeneCards" id="PELI2"/>
<dbReference type="HGNC" id="HGNC:8828">
    <property type="gene designation" value="PELI2"/>
</dbReference>
<dbReference type="HPA" id="ENSG00000139946">
    <property type="expression patterns" value="Low tissue specificity"/>
</dbReference>
<dbReference type="MIM" id="614798">
    <property type="type" value="gene"/>
</dbReference>
<dbReference type="neXtProt" id="NX_Q9HAT8"/>
<dbReference type="OpenTargets" id="ENSG00000139946"/>
<dbReference type="PharmGKB" id="PA33173"/>
<dbReference type="VEuPathDB" id="HostDB:ENSG00000139946"/>
<dbReference type="eggNOG" id="KOG3842">
    <property type="taxonomic scope" value="Eukaryota"/>
</dbReference>
<dbReference type="GeneTree" id="ENSGT00950000183050"/>
<dbReference type="HOGENOM" id="CLU_029221_2_0_1"/>
<dbReference type="InParanoid" id="Q9HAT8"/>
<dbReference type="OMA" id="WSKLIFQ"/>
<dbReference type="OrthoDB" id="8801906at2759"/>
<dbReference type="PAN-GO" id="Q9HAT8">
    <property type="GO annotations" value="2 GO annotations based on evolutionary models"/>
</dbReference>
<dbReference type="PhylomeDB" id="Q9HAT8"/>
<dbReference type="TreeFam" id="TF314338"/>
<dbReference type="PathwayCommons" id="Q9HAT8"/>
<dbReference type="Reactome" id="R-HSA-9020702">
    <property type="pathway name" value="Interleukin-1 signaling"/>
</dbReference>
<dbReference type="Reactome" id="R-HSA-937039">
    <property type="pathway name" value="IRAK1 recruits IKK complex"/>
</dbReference>
<dbReference type="Reactome" id="R-HSA-975144">
    <property type="pathway name" value="IRAK1 recruits IKK complex upon TLR7/8 or 9 stimulation"/>
</dbReference>
<dbReference type="SignaLink" id="Q9HAT8"/>
<dbReference type="SIGNOR" id="Q9HAT8"/>
<dbReference type="UniPathway" id="UPA00143"/>
<dbReference type="BioGRID-ORCS" id="57161">
    <property type="hits" value="14 hits in 1180 CRISPR screens"/>
</dbReference>
<dbReference type="ChiTaRS" id="PELI2">
    <property type="organism name" value="human"/>
</dbReference>
<dbReference type="EvolutionaryTrace" id="Q9HAT8"/>
<dbReference type="GeneWiki" id="PELI2"/>
<dbReference type="GenomeRNAi" id="57161"/>
<dbReference type="Pharos" id="Q9HAT8">
    <property type="development level" value="Tbio"/>
</dbReference>
<dbReference type="PRO" id="PR:Q9HAT8"/>
<dbReference type="Proteomes" id="UP000005640">
    <property type="component" value="Chromosome 14"/>
</dbReference>
<dbReference type="RNAct" id="Q9HAT8">
    <property type="molecule type" value="protein"/>
</dbReference>
<dbReference type="Bgee" id="ENSG00000139946">
    <property type="expression patterns" value="Expressed in ventricular zone and 180 other cell types or tissues"/>
</dbReference>
<dbReference type="ExpressionAtlas" id="Q9HAT8">
    <property type="expression patterns" value="baseline and differential"/>
</dbReference>
<dbReference type="GO" id="GO:0005829">
    <property type="term" value="C:cytosol"/>
    <property type="evidence" value="ECO:0000304"/>
    <property type="project" value="Reactome"/>
</dbReference>
<dbReference type="GO" id="GO:0061630">
    <property type="term" value="F:ubiquitin protein ligase activity"/>
    <property type="evidence" value="ECO:0000318"/>
    <property type="project" value="GO_Central"/>
</dbReference>
<dbReference type="GO" id="GO:0034450">
    <property type="term" value="F:ubiquitin-ubiquitin ligase activity"/>
    <property type="evidence" value="ECO:0000304"/>
    <property type="project" value="Reactome"/>
</dbReference>
<dbReference type="GO" id="GO:0043123">
    <property type="term" value="P:positive regulation of canonical NF-kappaB signal transduction"/>
    <property type="evidence" value="ECO:0000304"/>
    <property type="project" value="Reactome"/>
</dbReference>
<dbReference type="GO" id="GO:0043410">
    <property type="term" value="P:positive regulation of MAPK cascade"/>
    <property type="evidence" value="ECO:0000314"/>
    <property type="project" value="MGI"/>
</dbReference>
<dbReference type="GO" id="GO:0001934">
    <property type="term" value="P:positive regulation of protein phosphorylation"/>
    <property type="evidence" value="ECO:0000314"/>
    <property type="project" value="MGI"/>
</dbReference>
<dbReference type="GO" id="GO:0000209">
    <property type="term" value="P:protein polyubiquitination"/>
    <property type="evidence" value="ECO:0000318"/>
    <property type="project" value="GO_Central"/>
</dbReference>
<dbReference type="GO" id="GO:0008592">
    <property type="term" value="P:regulation of Toll signaling pathway"/>
    <property type="evidence" value="ECO:0007669"/>
    <property type="project" value="InterPro"/>
</dbReference>
<dbReference type="InterPro" id="IPR006800">
    <property type="entry name" value="Pellino_fam"/>
</dbReference>
<dbReference type="InterPro" id="IPR048334">
    <property type="entry name" value="Pellino_FHA"/>
</dbReference>
<dbReference type="InterPro" id="IPR048335">
    <property type="entry name" value="Pellino_RING"/>
</dbReference>
<dbReference type="PANTHER" id="PTHR12098:SF5">
    <property type="entry name" value="E3 UBIQUITIN-PROTEIN LIGASE PELLINO HOMOLOG 2"/>
    <property type="match status" value="1"/>
</dbReference>
<dbReference type="PANTHER" id="PTHR12098">
    <property type="entry name" value="E3 UBIQUITIN-PROTEIN LIGASE PELLINO-RELATED"/>
    <property type="match status" value="1"/>
</dbReference>
<dbReference type="Pfam" id="PF04710">
    <property type="entry name" value="Pellino_FHA"/>
    <property type="match status" value="1"/>
</dbReference>
<dbReference type="Pfam" id="PF20723">
    <property type="entry name" value="Pellino_RING"/>
    <property type="match status" value="1"/>
</dbReference>
<dbReference type="PIRSF" id="PIRSF038886">
    <property type="entry name" value="Pellino"/>
    <property type="match status" value="1"/>
</dbReference>
<name>PELI2_HUMAN</name>
<comment type="function">
    <text evidence="2 3 4 5 7">E3 ubiquitin ligase catalyzing the covalent attachment of ubiquitin moieties onto substrate proteins. Involved in the TLR and IL-1 signaling pathways via interaction with the complex containing IRAK kinases and TRAF6. Mediates IL1B-induced IRAK1 'Lys-63'-linked polyubiquitination and possibly 'Lys-48'-linked ubiquitination. May be important for LPS- and IL1B-induced MAP3K7-dependent, but not MAP3K3-dependent, NF-kappa-B activation. Can activate the MAP (mitogen activated protein) kinase pathway leading to activation of ELK1.</text>
</comment>
<comment type="catalytic activity">
    <reaction>
        <text>S-ubiquitinyl-[E2 ubiquitin-conjugating enzyme]-L-cysteine + [acceptor protein]-L-lysine = [E2 ubiquitin-conjugating enzyme]-L-cysteine + N(6)-ubiquitinyl-[acceptor protein]-L-lysine.</text>
        <dbReference type="EC" id="2.3.2.27"/>
    </reaction>
</comment>
<comment type="pathway">
    <text>Protein modification; protein ubiquitination.</text>
</comment>
<comment type="subunit">
    <text evidence="1">Interacts with TRAF6, IRAK1, IRAK4 and MAP3K7. Interacts with BCL10; this interaction is impaired by SOCS3 (By similarity).</text>
</comment>
<comment type="interaction">
    <interactant intactId="EBI-448407">
        <id>Q9HAT8</id>
    </interactant>
    <interactant intactId="EBI-11977093">
        <id>Q6ZS10</id>
        <label>CLEC17A</label>
    </interactant>
    <organismsDiffer>false</organismsDiffer>
    <experiments>3</experiments>
</comment>
<comment type="interaction">
    <interactant intactId="EBI-448407">
        <id>Q9HAT8</id>
    </interactant>
    <interactant intactId="EBI-2806068">
        <id>Q12891</id>
        <label>HYAL2</label>
    </interactant>
    <organismsDiffer>false</organismsDiffer>
    <experiments>3</experiments>
</comment>
<comment type="interaction">
    <interactant intactId="EBI-448407">
        <id>Q9HAT8</id>
    </interactant>
    <interactant intactId="EBI-358664">
        <id>P51617</id>
        <label>IRAK1</label>
    </interactant>
    <organismsDiffer>false</organismsDiffer>
    <experiments>4</experiments>
</comment>
<comment type="interaction">
    <interactant intactId="EBI-448407">
        <id>Q9HAT8</id>
    </interactant>
    <interactant intactId="EBI-448378">
        <id>Q9NWZ3</id>
        <label>IRAK4</label>
    </interactant>
    <organismsDiffer>false</organismsDiffer>
    <experiments>3</experiments>
</comment>
<comment type="interaction">
    <interactant intactId="EBI-448407">
        <id>Q9HAT8</id>
    </interactant>
    <interactant intactId="EBI-2824799">
        <id>Q9NQ48</id>
        <label>LZTFL1</label>
    </interactant>
    <organismsDiffer>false</organismsDiffer>
    <experiments>3</experiments>
</comment>
<comment type="interaction">
    <interactant intactId="EBI-448407">
        <id>Q9HAT8</id>
    </interactant>
    <interactant intactId="EBI-724076">
        <id>Q99750</id>
        <label>MDFI</label>
    </interactant>
    <organismsDiffer>false</organismsDiffer>
    <experiments>3</experiments>
</comment>
<comment type="interaction">
    <interactant intactId="EBI-448407">
        <id>Q9HAT8</id>
    </interactant>
    <interactant intactId="EBI-2864512">
        <id>P50221</id>
        <label>MEOX1</label>
    </interactant>
    <organismsDiffer>false</organismsDiffer>
    <experiments>3</experiments>
</comment>
<comment type="interaction">
    <interactant intactId="EBI-448407">
        <id>Q9HAT8</id>
    </interactant>
    <interactant intactId="EBI-347978">
        <id>P37198</id>
        <label>NUP62</label>
    </interactant>
    <organismsDiffer>false</organismsDiffer>
    <experiments>3</experiments>
</comment>
<comment type="interaction">
    <interactant intactId="EBI-448407">
        <id>Q9HAT8</id>
    </interactant>
    <interactant intactId="EBI-12826231">
        <id>Q96RA2</id>
        <label>OR7D2</label>
    </interactant>
    <organismsDiffer>false</organismsDiffer>
    <experiments>3</experiments>
</comment>
<comment type="interaction">
    <interactant intactId="EBI-448407">
        <id>Q9HAT8</id>
    </interactant>
    <interactant intactId="EBI-2129767">
        <id>P35227</id>
        <label>PCGF2</label>
    </interactant>
    <organismsDiffer>false</organismsDiffer>
    <experiments>3</experiments>
</comment>
<comment type="interaction">
    <interactant intactId="EBI-448407">
        <id>Q9HAT8</id>
    </interactant>
    <interactant intactId="EBI-447043">
        <id>Q15276</id>
        <label>RABEP1</label>
    </interactant>
    <organismsDiffer>false</organismsDiffer>
    <experiments>3</experiments>
</comment>
<comment type="interaction">
    <interactant intactId="EBI-448407">
        <id>Q9HAT8</id>
    </interactant>
    <interactant intactId="EBI-10829018">
        <id>Q04864-2</id>
        <label>REL</label>
    </interactant>
    <organismsDiffer>false</organismsDiffer>
    <experiments>3</experiments>
</comment>
<comment type="interaction">
    <interactant intactId="EBI-448407">
        <id>Q9HAT8</id>
    </interactant>
    <interactant intactId="EBI-1056589">
        <id>Q96TC7</id>
        <label>RMDN3</label>
    </interactant>
    <organismsDiffer>false</organismsDiffer>
    <experiments>3</experiments>
</comment>
<comment type="interaction">
    <interactant intactId="EBI-448407">
        <id>Q9HAT8</id>
    </interactant>
    <interactant intactId="EBI-727037">
        <id>Q9UH03</id>
        <label>SEPTIN3</label>
    </interactant>
    <organismsDiffer>false</organismsDiffer>
    <experiments>3</experiments>
</comment>
<comment type="interaction">
    <interactant intactId="EBI-448407">
        <id>Q9HAT8</id>
    </interactant>
    <interactant intactId="EBI-10198587">
        <id>Q02446</id>
        <label>SP4</label>
    </interactant>
    <organismsDiffer>false</organismsDiffer>
    <experiments>3</experiments>
</comment>
<comment type="interaction">
    <interactant intactId="EBI-448407">
        <id>Q9HAT8</id>
    </interactant>
    <interactant intactId="EBI-8649725">
        <id>Q9BSE2</id>
        <label>TMEM79</label>
    </interactant>
    <organismsDiffer>false</organismsDiffer>
    <experiments>3</experiments>
</comment>
<comment type="interaction">
    <interactant intactId="EBI-448407">
        <id>Q9HAT8</id>
    </interactant>
    <interactant intactId="EBI-2337775">
        <id>Q9H3D4</id>
        <label>TP63</label>
    </interactant>
    <organismsDiffer>false</organismsDiffer>
    <experiments>3</experiments>
</comment>
<comment type="interaction">
    <interactant intactId="EBI-448407">
        <id>Q9HAT8</id>
    </interactant>
    <interactant intactId="EBI-742790">
        <id>Q13049</id>
        <label>TRIM32</label>
    </interactant>
    <organismsDiffer>false</organismsDiffer>
    <experiments>3</experiments>
</comment>
<comment type="domain">
    <text evidence="6">The atypical FHA domain contains a 'wing' insert and mediates binding to threonine-phosphorylated IRAK1.</text>
</comment>
<comment type="PTM">
    <text evidence="3">Phosphorylated by IRAK1 and IRAK4 enhancing its E3 ligase activity.</text>
</comment>
<comment type="similarity">
    <text evidence="8">Belongs to the pellino family.</text>
</comment>
<accession>Q9HAT8</accession>
<accession>B2RDY5</accession>
<reference key="1">
    <citation type="journal article" date="2001" name="Cytogenet. Cell Genet.">
        <title>Assignment of homologous genes, Peli1/PELI1 and Peli2/PELI2, for the Pelle adaptor protein Pellino to mouse chromosomes 11 and 14 and human chromosomes 2p13.3 and 14q21, respectively, by physical and radiation hybrid mapping.</title>
        <authorList>
            <person name="Resch K."/>
            <person name="Jockusch H."/>
            <person name="Schmitt-John T."/>
        </authorList>
    </citation>
    <scope>NUCLEOTIDE SEQUENCE [MRNA]</scope>
</reference>
<reference key="2">
    <citation type="journal article" date="2004" name="Nat. Genet.">
        <title>Complete sequencing and characterization of 21,243 full-length human cDNAs.</title>
        <authorList>
            <person name="Ota T."/>
            <person name="Suzuki Y."/>
            <person name="Nishikawa T."/>
            <person name="Otsuki T."/>
            <person name="Sugiyama T."/>
            <person name="Irie R."/>
            <person name="Wakamatsu A."/>
            <person name="Hayashi K."/>
            <person name="Sato H."/>
            <person name="Nagai K."/>
            <person name="Kimura K."/>
            <person name="Makita H."/>
            <person name="Sekine M."/>
            <person name="Obayashi M."/>
            <person name="Nishi T."/>
            <person name="Shibahara T."/>
            <person name="Tanaka T."/>
            <person name="Ishii S."/>
            <person name="Yamamoto J."/>
            <person name="Saito K."/>
            <person name="Kawai Y."/>
            <person name="Isono Y."/>
            <person name="Nakamura Y."/>
            <person name="Nagahari K."/>
            <person name="Murakami K."/>
            <person name="Yasuda T."/>
            <person name="Iwayanagi T."/>
            <person name="Wagatsuma M."/>
            <person name="Shiratori A."/>
            <person name="Sudo H."/>
            <person name="Hosoiri T."/>
            <person name="Kaku Y."/>
            <person name="Kodaira H."/>
            <person name="Kondo H."/>
            <person name="Sugawara M."/>
            <person name="Takahashi M."/>
            <person name="Kanda K."/>
            <person name="Yokoi T."/>
            <person name="Furuya T."/>
            <person name="Kikkawa E."/>
            <person name="Omura Y."/>
            <person name="Abe K."/>
            <person name="Kamihara K."/>
            <person name="Katsuta N."/>
            <person name="Sato K."/>
            <person name="Tanikawa M."/>
            <person name="Yamazaki M."/>
            <person name="Ninomiya K."/>
            <person name="Ishibashi T."/>
            <person name="Yamashita H."/>
            <person name="Murakawa K."/>
            <person name="Fujimori K."/>
            <person name="Tanai H."/>
            <person name="Kimata M."/>
            <person name="Watanabe M."/>
            <person name="Hiraoka S."/>
            <person name="Chiba Y."/>
            <person name="Ishida S."/>
            <person name="Ono Y."/>
            <person name="Takiguchi S."/>
            <person name="Watanabe S."/>
            <person name="Yosida M."/>
            <person name="Hotuta T."/>
            <person name="Kusano J."/>
            <person name="Kanehori K."/>
            <person name="Takahashi-Fujii A."/>
            <person name="Hara H."/>
            <person name="Tanase T.-O."/>
            <person name="Nomura Y."/>
            <person name="Togiya S."/>
            <person name="Komai F."/>
            <person name="Hara R."/>
            <person name="Takeuchi K."/>
            <person name="Arita M."/>
            <person name="Imose N."/>
            <person name="Musashino K."/>
            <person name="Yuuki H."/>
            <person name="Oshima A."/>
            <person name="Sasaki N."/>
            <person name="Aotsuka S."/>
            <person name="Yoshikawa Y."/>
            <person name="Matsunawa H."/>
            <person name="Ichihara T."/>
            <person name="Shiohata N."/>
            <person name="Sano S."/>
            <person name="Moriya S."/>
            <person name="Momiyama H."/>
            <person name="Satoh N."/>
            <person name="Takami S."/>
            <person name="Terashima Y."/>
            <person name="Suzuki O."/>
            <person name="Nakagawa S."/>
            <person name="Senoh A."/>
            <person name="Mizoguchi H."/>
            <person name="Goto Y."/>
            <person name="Shimizu F."/>
            <person name="Wakebe H."/>
            <person name="Hishigaki H."/>
            <person name="Watanabe T."/>
            <person name="Sugiyama A."/>
            <person name="Takemoto M."/>
            <person name="Kawakami B."/>
            <person name="Yamazaki M."/>
            <person name="Watanabe K."/>
            <person name="Kumagai A."/>
            <person name="Itakura S."/>
            <person name="Fukuzumi Y."/>
            <person name="Fujimori Y."/>
            <person name="Komiyama M."/>
            <person name="Tashiro H."/>
            <person name="Tanigami A."/>
            <person name="Fujiwara T."/>
            <person name="Ono T."/>
            <person name="Yamada K."/>
            <person name="Fujii Y."/>
            <person name="Ozaki K."/>
            <person name="Hirao M."/>
            <person name="Ohmori Y."/>
            <person name="Kawabata A."/>
            <person name="Hikiji T."/>
            <person name="Kobatake N."/>
            <person name="Inagaki H."/>
            <person name="Ikema Y."/>
            <person name="Okamoto S."/>
            <person name="Okitani R."/>
            <person name="Kawakami T."/>
            <person name="Noguchi S."/>
            <person name="Itoh T."/>
            <person name="Shigeta K."/>
            <person name="Senba T."/>
            <person name="Matsumura K."/>
            <person name="Nakajima Y."/>
            <person name="Mizuno T."/>
            <person name="Morinaga M."/>
            <person name="Sasaki M."/>
            <person name="Togashi T."/>
            <person name="Oyama M."/>
            <person name="Hata H."/>
            <person name="Watanabe M."/>
            <person name="Komatsu T."/>
            <person name="Mizushima-Sugano J."/>
            <person name="Satoh T."/>
            <person name="Shirai Y."/>
            <person name="Takahashi Y."/>
            <person name="Nakagawa K."/>
            <person name="Okumura K."/>
            <person name="Nagase T."/>
            <person name="Nomura N."/>
            <person name="Kikuchi H."/>
            <person name="Masuho Y."/>
            <person name="Yamashita R."/>
            <person name="Nakai K."/>
            <person name="Yada T."/>
            <person name="Nakamura Y."/>
            <person name="Ohara O."/>
            <person name="Isogai T."/>
            <person name="Sugano S."/>
        </authorList>
    </citation>
    <scope>NUCLEOTIDE SEQUENCE [LARGE SCALE MRNA]</scope>
    <source>
        <tissue>Testis</tissue>
    </source>
</reference>
<reference key="3">
    <citation type="submission" date="2005-07" db="EMBL/GenBank/DDBJ databases">
        <authorList>
            <person name="Mural R.J."/>
            <person name="Istrail S."/>
            <person name="Sutton G.G."/>
            <person name="Florea L."/>
            <person name="Halpern A.L."/>
            <person name="Mobarry C.M."/>
            <person name="Lippert R."/>
            <person name="Walenz B."/>
            <person name="Shatkay H."/>
            <person name="Dew I."/>
            <person name="Miller J.R."/>
            <person name="Flanigan M.J."/>
            <person name="Edwards N.J."/>
            <person name="Bolanos R."/>
            <person name="Fasulo D."/>
            <person name="Halldorsson B.V."/>
            <person name="Hannenhalli S."/>
            <person name="Turner R."/>
            <person name="Yooseph S."/>
            <person name="Lu F."/>
            <person name="Nusskern D.R."/>
            <person name="Shue B.C."/>
            <person name="Zheng X.H."/>
            <person name="Zhong F."/>
            <person name="Delcher A.L."/>
            <person name="Huson D.H."/>
            <person name="Kravitz S.A."/>
            <person name="Mouchard L."/>
            <person name="Reinert K."/>
            <person name="Remington K.A."/>
            <person name="Clark A.G."/>
            <person name="Waterman M.S."/>
            <person name="Eichler E.E."/>
            <person name="Adams M.D."/>
            <person name="Hunkapiller M.W."/>
            <person name="Myers E.W."/>
            <person name="Venter J.C."/>
        </authorList>
    </citation>
    <scope>NUCLEOTIDE SEQUENCE [LARGE SCALE GENOMIC DNA]</scope>
</reference>
<reference key="4">
    <citation type="journal article" date="2004" name="Genome Res.">
        <title>The status, quality, and expansion of the NIH full-length cDNA project: the Mammalian Gene Collection (MGC).</title>
        <authorList>
            <consortium name="The MGC Project Team"/>
        </authorList>
    </citation>
    <scope>NUCLEOTIDE SEQUENCE [LARGE SCALE MRNA]</scope>
    <source>
        <tissue>Lung</tissue>
    </source>
</reference>
<reference key="5">
    <citation type="journal article" date="2003" name="FEBS Lett.">
        <title>Pellino2 activates the mitogen activated protein kinase pathway.</title>
        <authorList>
            <person name="Jensen L.E."/>
            <person name="Whitehead A.S."/>
        </authorList>
    </citation>
    <scope>FUNCTION</scope>
    <scope>INTERACTION WITH TRAF6 AND MAP3K7</scope>
</reference>
<reference key="6">
    <citation type="journal article" date="2003" name="FEBS Lett.">
        <title>Characterization of Pellino2, a substrate of IRAK1 and IRAK4.</title>
        <authorList>
            <person name="Strelow A."/>
            <person name="Kollewe C."/>
            <person name="Wesche H."/>
        </authorList>
    </citation>
    <scope>FUNCTION</scope>
    <scope>PHOSPHORYLATION</scope>
    <scope>INTERACTION WITH IRAK1 AND IRAK4</scope>
</reference>
<reference key="7">
    <citation type="journal article" date="2007" name="J. Biol. Chem.">
        <title>Kinase-active interleukin-1 receptor-associated kinases promote polyubiquitination and degradation of the Pellino family: direct evidence for PELLINO proteins being ubiquitin-protein isopeptide ligases.</title>
        <authorList>
            <person name="Butler M.P."/>
            <person name="Hanly J.A."/>
            <person name="Moynagh P.N."/>
        </authorList>
    </citation>
    <scope>FUNCTION AS E3 UBIQUITIN LIGASE</scope>
</reference>
<reference key="8">
    <citation type="journal article" date="2008" name="Biochem. J.">
        <title>The IRAK-catalysed activation of the E3 ligase function of Pellino isoforms induces the Lys63-linked polyubiquitination of IRAK1.</title>
        <authorList>
            <person name="Ordureau A."/>
            <person name="Smith H."/>
            <person name="Windheim M."/>
            <person name="Peggie M."/>
            <person name="Carrick E."/>
            <person name="Morrice N."/>
            <person name="Cohen P."/>
        </authorList>
    </citation>
    <scope>FUNCTION</scope>
</reference>
<reference key="9">
    <citation type="journal article" date="2012" name="J. Biol. Chem.">
        <title>Pellino 2 is critical for Toll-like receptor/interleukin-1 receptor (TLR/IL-1R)-mediated post-transcriptional control.</title>
        <authorList>
            <person name="Kim T.W."/>
            <person name="Yu M."/>
            <person name="Zhou H."/>
            <person name="Cui W."/>
            <person name="Wang J."/>
            <person name="DiCorleto P."/>
            <person name="Fox P."/>
            <person name="Xiao H."/>
            <person name="Li X."/>
        </authorList>
    </citation>
    <scope>FUNCTION</scope>
    <scope>MUTAGENESIS OF CYS-397 AND CYS-400</scope>
</reference>
<reference key="10">
    <citation type="journal article" date="2008" name="Structure">
        <title>Pellino proteins contain a cryptic FHA domain that mediates interaction with phosphorylated IRAK1.</title>
        <authorList>
            <person name="Lin C.C."/>
            <person name="Huoh Y.S."/>
            <person name="Schmitz K.R."/>
            <person name="Jensen L.E."/>
            <person name="Ferguson K.M."/>
        </authorList>
    </citation>
    <scope>X-RAY CRYSTALLOGRAPHY (1.8 ANGSTROMS) OF 15-275</scope>
    <scope>DOMAIN FHA</scope>
    <scope>MUTAGENESIS OF ARG-106; THR-187 AND ASN-188</scope>
</reference>
<feature type="chain" id="PRO_0000194174" description="E3 ubiquitin-protein ligase pellino homolog 2">
    <location>
        <begin position="1"/>
        <end position="420"/>
    </location>
</feature>
<feature type="domain" description="FHA; atypical">
    <location>
        <begin position="15"/>
        <end position="202"/>
    </location>
</feature>
<feature type="mutagenesis site" description="Abolishes binding to IRAK1." evidence="6">
    <original>R</original>
    <variation>A</variation>
    <location>
        <position position="106"/>
    </location>
</feature>
<feature type="mutagenesis site" description="Abolishes binding to IRAK1; when associated with A-188." evidence="6">
    <original>T</original>
    <variation>A</variation>
    <location>
        <position position="187"/>
    </location>
</feature>
<feature type="mutagenesis site" description="Abolishes binding to IRAK1; when associated with A-187." evidence="6">
    <original>N</original>
    <variation>A</variation>
    <location>
        <position position="188"/>
    </location>
</feature>
<feature type="mutagenesis site" description="Loss of IRAK1-polyubiquitination." evidence="7">
    <original>C</original>
    <variation>A</variation>
    <location>
        <position position="397"/>
    </location>
</feature>
<feature type="mutagenesis site" description="Loss of IRAK1-polyubiquitination." evidence="7">
    <original>C</original>
    <variation>A</variation>
    <location>
        <position position="400"/>
    </location>
</feature>
<feature type="strand" evidence="9">
    <location>
        <begin position="18"/>
        <end position="24"/>
    </location>
</feature>
<feature type="strand" evidence="9">
    <location>
        <begin position="41"/>
        <end position="46"/>
    </location>
</feature>
<feature type="strand" evidence="9">
    <location>
        <begin position="53"/>
        <end position="63"/>
    </location>
</feature>
<feature type="strand" evidence="9">
    <location>
        <begin position="76"/>
        <end position="82"/>
    </location>
</feature>
<feature type="strand" evidence="9">
    <location>
        <begin position="84"/>
        <end position="96"/>
    </location>
</feature>
<feature type="strand" evidence="9">
    <location>
        <begin position="99"/>
        <end position="106"/>
    </location>
</feature>
<feature type="strand" evidence="9">
    <location>
        <begin position="113"/>
        <end position="115"/>
    </location>
</feature>
<feature type="strand" evidence="9">
    <location>
        <begin position="141"/>
        <end position="148"/>
    </location>
</feature>
<feature type="strand" evidence="9">
    <location>
        <begin position="153"/>
        <end position="158"/>
    </location>
</feature>
<feature type="strand" evidence="9">
    <location>
        <begin position="164"/>
        <end position="168"/>
    </location>
</feature>
<feature type="strand" evidence="9">
    <location>
        <begin position="174"/>
        <end position="176"/>
    </location>
</feature>
<feature type="strand" evidence="9">
    <location>
        <begin position="182"/>
        <end position="184"/>
    </location>
</feature>
<feature type="strand" evidence="9">
    <location>
        <begin position="190"/>
        <end position="193"/>
    </location>
</feature>
<feature type="strand" evidence="9">
    <location>
        <begin position="208"/>
        <end position="211"/>
    </location>
</feature>
<feature type="strand" evidence="10">
    <location>
        <begin position="215"/>
        <end position="218"/>
    </location>
</feature>
<feature type="strand" evidence="10">
    <location>
        <begin position="222"/>
        <end position="225"/>
    </location>
</feature>
<feature type="strand" evidence="9">
    <location>
        <begin position="245"/>
        <end position="247"/>
    </location>
</feature>
<feature type="strand" evidence="9">
    <location>
        <begin position="252"/>
        <end position="257"/>
    </location>
</feature>
<feature type="helix" evidence="10">
    <location>
        <begin position="258"/>
        <end position="263"/>
    </location>
</feature>
<feature type="helix" evidence="10">
    <location>
        <begin position="266"/>
        <end position="269"/>
    </location>
</feature>
<feature type="helix" evidence="10">
    <location>
        <begin position="270"/>
        <end position="276"/>
    </location>
</feature>
<evidence type="ECO:0000250" key="1"/>
<evidence type="ECO:0000269" key="2">
    <source>
    </source>
</evidence>
<evidence type="ECO:0000269" key="3">
    <source>
    </source>
</evidence>
<evidence type="ECO:0000269" key="4">
    <source>
    </source>
</evidence>
<evidence type="ECO:0000269" key="5">
    <source>
    </source>
</evidence>
<evidence type="ECO:0000269" key="6">
    <source>
    </source>
</evidence>
<evidence type="ECO:0000269" key="7">
    <source>
    </source>
</evidence>
<evidence type="ECO:0000305" key="8"/>
<evidence type="ECO:0007829" key="9">
    <source>
        <dbReference type="PDB" id="3EGA"/>
    </source>
</evidence>
<evidence type="ECO:0007829" key="10">
    <source>
        <dbReference type="PDB" id="3EGB"/>
    </source>
</evidence>
<sequence>MFSPGQEEHCAPNKEPVKYGELVVLGYNGALPNGDRGRRKSRFALYKRPKANGVKPSTVHVISTPQASKAISCKGQHSISYTLSRNQTVVVEYTHDKDTDMFQVGRSTESPIDFVVTDTISGSQNTDEAQITQSTISRFACRIVCDRNEPYTARIFAAGFDSSKNIFLGEKAAKWKNPDGHMDGLTTNGVLVMHPRGGFTEESQPGVWREISVCGDVYTLRETRSAQQRGKLVESETNVLQDGSLIDLCGATLLWRTADGLFHTPTQKHIEALRQEINAARPQCPVGLNTLAFPSINRKEVVEEKQPWAYLSCGHVHGYHNWGHRSDTEANERECPMCRTVGPYVPLWLGCEAGFYVDAGPPTHAFTPCGHVCSEKSAKYWSQIPLPHGTHAFHAACPFCATQLVGEQNCIKLIFQGPID</sequence>
<proteinExistence type="evidence at protein level"/>
<keyword id="KW-0002">3D-structure</keyword>
<keyword id="KW-0597">Phosphoprotein</keyword>
<keyword id="KW-1267">Proteomics identification</keyword>
<keyword id="KW-1185">Reference proteome</keyword>
<keyword id="KW-0808">Transferase</keyword>
<keyword id="KW-0833">Ubl conjugation pathway</keyword>
<gene>
    <name type="primary">PELI2</name>
</gene>
<protein>
    <recommendedName>
        <fullName>E3 ubiquitin-protein ligase pellino homolog 2</fullName>
        <shortName>Pellino-2</shortName>
        <ecNumber>2.3.2.27</ecNumber>
    </recommendedName>
    <alternativeName>
        <fullName evidence="8">RING-type E3 ubiquitin transferase pellino homolog 2</fullName>
    </alternativeName>
</protein>
<organism>
    <name type="scientific">Homo sapiens</name>
    <name type="common">Human</name>
    <dbReference type="NCBI Taxonomy" id="9606"/>
    <lineage>
        <taxon>Eukaryota</taxon>
        <taxon>Metazoa</taxon>
        <taxon>Chordata</taxon>
        <taxon>Craniata</taxon>
        <taxon>Vertebrata</taxon>
        <taxon>Euteleostomi</taxon>
        <taxon>Mammalia</taxon>
        <taxon>Eutheria</taxon>
        <taxon>Euarchontoglires</taxon>
        <taxon>Primates</taxon>
        <taxon>Haplorrhini</taxon>
        <taxon>Catarrhini</taxon>
        <taxon>Hominidae</taxon>
        <taxon>Homo</taxon>
    </lineage>
</organism>